<reference key="1">
    <citation type="journal article" date="2005" name="J. Bacteriol.">
        <title>Complete genome sequence and analysis of the multiresistant nosocomial pathogen Corynebacterium jeikeium K411, a lipid-requiring bacterium of the human skin flora.</title>
        <authorList>
            <person name="Tauch A."/>
            <person name="Kaiser O."/>
            <person name="Hain T."/>
            <person name="Goesmann A."/>
            <person name="Weisshaar B."/>
            <person name="Albersmeier A."/>
            <person name="Bekel T."/>
            <person name="Bischoff N."/>
            <person name="Brune I."/>
            <person name="Chakraborty T."/>
            <person name="Kalinowski J."/>
            <person name="Meyer F."/>
            <person name="Rupp O."/>
            <person name="Schneiker S."/>
            <person name="Viehoever P."/>
            <person name="Puehler A."/>
        </authorList>
    </citation>
    <scope>NUCLEOTIDE SEQUENCE [LARGE SCALE GENOMIC DNA]</scope>
    <source>
        <strain>K411</strain>
    </source>
</reference>
<sequence>MSPTTPRSVEPSGLKPEQLPPSYFTWPGLLGRLGNGQELSEAQVRWAMNEIMEGNATDAQIAAFAFGIRVRGITAAELAAAAETMTSFATPVDFSDVPNCVDIVGTGGDGHHTVNISTMASFVVSAAGVPVVKHGNRAASSKCGGADMLEALGLDIERSPEDIRQDAHDTGFAFMFAKTYHPAMRFAGPVRSQLGAPTIFNLLGPMTNPAYPKFGLIGCAFKEFMPIMGGAFARQGSRVLVVRGMDGMDEISVCTPTEVVTVDAAGRTGEEVINPRNVGLDFYEDGSLVGGDAEYNADVAVRLMKGEISGAIKDAVLINAAGALTAVRGWEENGFQETLREQVQIAREALESGAALKQMEKIVGKEF</sequence>
<keyword id="KW-0028">Amino-acid biosynthesis</keyword>
<keyword id="KW-0057">Aromatic amino acid biosynthesis</keyword>
<keyword id="KW-0328">Glycosyltransferase</keyword>
<keyword id="KW-0460">Magnesium</keyword>
<keyword id="KW-0479">Metal-binding</keyword>
<keyword id="KW-1185">Reference proteome</keyword>
<keyword id="KW-0808">Transferase</keyword>
<keyword id="KW-0822">Tryptophan biosynthesis</keyword>
<name>TRPD_CORJK</name>
<accession>Q4JWC7</accession>
<evidence type="ECO:0000255" key="1">
    <source>
        <dbReference type="HAMAP-Rule" id="MF_00211"/>
    </source>
</evidence>
<protein>
    <recommendedName>
        <fullName evidence="1">Anthranilate phosphoribosyltransferase</fullName>
        <ecNumber evidence="1">2.4.2.18</ecNumber>
    </recommendedName>
</protein>
<proteinExistence type="inferred from homology"/>
<feature type="chain" id="PRO_0000227151" description="Anthranilate phosphoribosyltransferase">
    <location>
        <begin position="1"/>
        <end position="367"/>
    </location>
</feature>
<feature type="binding site" evidence="1">
    <location>
        <position position="105"/>
    </location>
    <ligand>
        <name>5-phospho-alpha-D-ribose 1-diphosphate</name>
        <dbReference type="ChEBI" id="CHEBI:58017"/>
    </ligand>
</feature>
<feature type="binding site" evidence="1">
    <location>
        <position position="105"/>
    </location>
    <ligand>
        <name>anthranilate</name>
        <dbReference type="ChEBI" id="CHEBI:16567"/>
        <label>1</label>
    </ligand>
</feature>
<feature type="binding site" evidence="1">
    <location>
        <begin position="108"/>
        <end position="109"/>
    </location>
    <ligand>
        <name>5-phospho-alpha-D-ribose 1-diphosphate</name>
        <dbReference type="ChEBI" id="CHEBI:58017"/>
    </ligand>
</feature>
<feature type="binding site" evidence="1">
    <location>
        <position position="113"/>
    </location>
    <ligand>
        <name>5-phospho-alpha-D-ribose 1-diphosphate</name>
        <dbReference type="ChEBI" id="CHEBI:58017"/>
    </ligand>
</feature>
<feature type="binding site" evidence="1">
    <location>
        <begin position="115"/>
        <end position="118"/>
    </location>
    <ligand>
        <name>5-phospho-alpha-D-ribose 1-diphosphate</name>
        <dbReference type="ChEBI" id="CHEBI:58017"/>
    </ligand>
</feature>
<feature type="binding site" evidence="1">
    <location>
        <position position="117"/>
    </location>
    <ligand>
        <name>Mg(2+)</name>
        <dbReference type="ChEBI" id="CHEBI:18420"/>
        <label>1</label>
    </ligand>
</feature>
<feature type="binding site" evidence="1">
    <location>
        <begin position="133"/>
        <end position="141"/>
    </location>
    <ligand>
        <name>5-phospho-alpha-D-ribose 1-diphosphate</name>
        <dbReference type="ChEBI" id="CHEBI:58017"/>
    </ligand>
</feature>
<feature type="binding site" evidence="1">
    <location>
        <position position="136"/>
    </location>
    <ligand>
        <name>anthranilate</name>
        <dbReference type="ChEBI" id="CHEBI:16567"/>
        <label>1</label>
    </ligand>
</feature>
<feature type="binding site" evidence="1">
    <location>
        <position position="145"/>
    </location>
    <ligand>
        <name>5-phospho-alpha-D-ribose 1-diphosphate</name>
        <dbReference type="ChEBI" id="CHEBI:58017"/>
    </ligand>
</feature>
<feature type="binding site" evidence="1">
    <location>
        <position position="191"/>
    </location>
    <ligand>
        <name>anthranilate</name>
        <dbReference type="ChEBI" id="CHEBI:16567"/>
        <label>2</label>
    </ligand>
</feature>
<feature type="binding site" evidence="1">
    <location>
        <position position="249"/>
    </location>
    <ligand>
        <name>Mg(2+)</name>
        <dbReference type="ChEBI" id="CHEBI:18420"/>
        <label>2</label>
    </ligand>
</feature>
<feature type="binding site" evidence="1">
    <location>
        <position position="250"/>
    </location>
    <ligand>
        <name>Mg(2+)</name>
        <dbReference type="ChEBI" id="CHEBI:18420"/>
        <label>1</label>
    </ligand>
</feature>
<feature type="binding site" evidence="1">
    <location>
        <position position="250"/>
    </location>
    <ligand>
        <name>Mg(2+)</name>
        <dbReference type="ChEBI" id="CHEBI:18420"/>
        <label>2</label>
    </ligand>
</feature>
<comment type="function">
    <text evidence="1">Catalyzes the transfer of the phosphoribosyl group of 5-phosphorylribose-1-pyrophosphate (PRPP) to anthranilate to yield N-(5'-phosphoribosyl)-anthranilate (PRA).</text>
</comment>
<comment type="catalytic activity">
    <reaction evidence="1">
        <text>N-(5-phospho-beta-D-ribosyl)anthranilate + diphosphate = 5-phospho-alpha-D-ribose 1-diphosphate + anthranilate</text>
        <dbReference type="Rhea" id="RHEA:11768"/>
        <dbReference type="ChEBI" id="CHEBI:16567"/>
        <dbReference type="ChEBI" id="CHEBI:18277"/>
        <dbReference type="ChEBI" id="CHEBI:33019"/>
        <dbReference type="ChEBI" id="CHEBI:58017"/>
        <dbReference type="EC" id="2.4.2.18"/>
    </reaction>
</comment>
<comment type="cofactor">
    <cofactor evidence="1">
        <name>Mg(2+)</name>
        <dbReference type="ChEBI" id="CHEBI:18420"/>
    </cofactor>
    <text evidence="1">Binds 2 magnesium ions per monomer.</text>
</comment>
<comment type="pathway">
    <text evidence="1">Amino-acid biosynthesis; L-tryptophan biosynthesis; L-tryptophan from chorismate: step 2/5.</text>
</comment>
<comment type="subunit">
    <text evidence="1">Homodimer.</text>
</comment>
<comment type="similarity">
    <text evidence="1">Belongs to the anthranilate phosphoribosyltransferase family.</text>
</comment>
<gene>
    <name evidence="1" type="primary">trpD</name>
    <name type="ordered locus">jk0718</name>
</gene>
<dbReference type="EC" id="2.4.2.18" evidence="1"/>
<dbReference type="EMBL" id="CR931997">
    <property type="protein sequence ID" value="CAI36880.1"/>
    <property type="molecule type" value="Genomic_DNA"/>
</dbReference>
<dbReference type="RefSeq" id="WP_011273336.1">
    <property type="nucleotide sequence ID" value="NC_007164.1"/>
</dbReference>
<dbReference type="SMR" id="Q4JWC7"/>
<dbReference type="STRING" id="306537.jk0718"/>
<dbReference type="KEGG" id="cjk:jk0718"/>
<dbReference type="PATRIC" id="fig|306537.10.peg.728"/>
<dbReference type="eggNOG" id="COG0547">
    <property type="taxonomic scope" value="Bacteria"/>
</dbReference>
<dbReference type="HOGENOM" id="CLU_034315_2_1_11"/>
<dbReference type="OrthoDB" id="9806430at2"/>
<dbReference type="UniPathway" id="UPA00035">
    <property type="reaction ID" value="UER00041"/>
</dbReference>
<dbReference type="Proteomes" id="UP000000545">
    <property type="component" value="Chromosome"/>
</dbReference>
<dbReference type="GO" id="GO:0005829">
    <property type="term" value="C:cytosol"/>
    <property type="evidence" value="ECO:0007669"/>
    <property type="project" value="TreeGrafter"/>
</dbReference>
<dbReference type="GO" id="GO:0004048">
    <property type="term" value="F:anthranilate phosphoribosyltransferase activity"/>
    <property type="evidence" value="ECO:0007669"/>
    <property type="project" value="UniProtKB-UniRule"/>
</dbReference>
<dbReference type="GO" id="GO:0000287">
    <property type="term" value="F:magnesium ion binding"/>
    <property type="evidence" value="ECO:0007669"/>
    <property type="project" value="UniProtKB-UniRule"/>
</dbReference>
<dbReference type="GO" id="GO:0000162">
    <property type="term" value="P:L-tryptophan biosynthetic process"/>
    <property type="evidence" value="ECO:0007669"/>
    <property type="project" value="UniProtKB-UniRule"/>
</dbReference>
<dbReference type="FunFam" id="3.40.1030.10:FF:000002">
    <property type="entry name" value="Anthranilate phosphoribosyltransferase"/>
    <property type="match status" value="1"/>
</dbReference>
<dbReference type="Gene3D" id="3.40.1030.10">
    <property type="entry name" value="Nucleoside phosphorylase/phosphoribosyltransferase catalytic domain"/>
    <property type="match status" value="1"/>
</dbReference>
<dbReference type="Gene3D" id="1.20.970.10">
    <property type="entry name" value="Transferase, Pyrimidine Nucleoside Phosphorylase, Chain C"/>
    <property type="match status" value="1"/>
</dbReference>
<dbReference type="HAMAP" id="MF_00211">
    <property type="entry name" value="TrpD"/>
    <property type="match status" value="1"/>
</dbReference>
<dbReference type="InterPro" id="IPR005940">
    <property type="entry name" value="Anthranilate_Pribosyl_Tfrase"/>
</dbReference>
<dbReference type="InterPro" id="IPR000312">
    <property type="entry name" value="Glycosyl_Trfase_fam3"/>
</dbReference>
<dbReference type="InterPro" id="IPR017459">
    <property type="entry name" value="Glycosyl_Trfase_fam3_N_dom"/>
</dbReference>
<dbReference type="InterPro" id="IPR036320">
    <property type="entry name" value="Glycosyl_Trfase_fam3_N_dom_sf"/>
</dbReference>
<dbReference type="InterPro" id="IPR035902">
    <property type="entry name" value="Nuc_phospho_transferase"/>
</dbReference>
<dbReference type="NCBIfam" id="TIGR01245">
    <property type="entry name" value="trpD"/>
    <property type="match status" value="1"/>
</dbReference>
<dbReference type="PANTHER" id="PTHR43285">
    <property type="entry name" value="ANTHRANILATE PHOSPHORIBOSYLTRANSFERASE"/>
    <property type="match status" value="1"/>
</dbReference>
<dbReference type="PANTHER" id="PTHR43285:SF2">
    <property type="entry name" value="ANTHRANILATE PHOSPHORIBOSYLTRANSFERASE"/>
    <property type="match status" value="1"/>
</dbReference>
<dbReference type="Pfam" id="PF02885">
    <property type="entry name" value="Glycos_trans_3N"/>
    <property type="match status" value="1"/>
</dbReference>
<dbReference type="Pfam" id="PF00591">
    <property type="entry name" value="Glycos_transf_3"/>
    <property type="match status" value="1"/>
</dbReference>
<dbReference type="SUPFAM" id="SSF52418">
    <property type="entry name" value="Nucleoside phosphorylase/phosphoribosyltransferase catalytic domain"/>
    <property type="match status" value="1"/>
</dbReference>
<dbReference type="SUPFAM" id="SSF47648">
    <property type="entry name" value="Nucleoside phosphorylase/phosphoribosyltransferase N-terminal domain"/>
    <property type="match status" value="1"/>
</dbReference>
<organism>
    <name type="scientific">Corynebacterium jeikeium (strain K411)</name>
    <dbReference type="NCBI Taxonomy" id="306537"/>
    <lineage>
        <taxon>Bacteria</taxon>
        <taxon>Bacillati</taxon>
        <taxon>Actinomycetota</taxon>
        <taxon>Actinomycetes</taxon>
        <taxon>Mycobacteriales</taxon>
        <taxon>Corynebacteriaceae</taxon>
        <taxon>Corynebacterium</taxon>
    </lineage>
</organism>